<accession>B4TZR1</accession>
<gene>
    <name evidence="1" type="primary">cbiD</name>
    <name type="ordered locus">SeSA_A2201</name>
</gene>
<protein>
    <recommendedName>
        <fullName evidence="1">Cobalt-precorrin-5B C(1)-methyltransferase</fullName>
        <ecNumber evidence="1">2.1.1.195</ecNumber>
    </recommendedName>
    <alternativeName>
        <fullName evidence="1">Cobalt-precorrin-6A synthase</fullName>
    </alternativeName>
</protein>
<proteinExistence type="inferred from homology"/>
<sequence length="379" mass="40786">MSELSFDAPVWHHGKALRKGYTTGSCATAAAKVAALMVLRQHLIHQVSIVTPSGVTLCLNVESPHIEGQQAIAAIRKDGGDDVDATHGMLIFARVTLNDSGEITLTGGEGIGTVTRKGVGLPLGSAAINRTPRHTIESAVREAIGPARGADVEIFAPEGEARAQKTYNSRLGILGGISIIGTTGIVTPMSEESWKRSLSLELEIKRASGLTRVILVPGNHGERFVREQMGVDTQAVVTMSNFVGYMIEEAVRLGFCQIVLVGHPGKLIKIAAGIFHTHSHIADARMETLVAHLALLGAPLELLTLVSDCDTTEAAMEHIEAYGFGHIYNHLARRICLRVMQMLRFTKTPPVCDAILFSFDNHILGSNRPVDEIAKELQC</sequence>
<name>CBID_SALSV</name>
<comment type="function">
    <text evidence="1">Catalyzes the methylation of C-1 in cobalt-precorrin-5B to form cobalt-precorrin-6A.</text>
</comment>
<comment type="catalytic activity">
    <reaction evidence="1">
        <text>Co-precorrin-5B + S-adenosyl-L-methionine = Co-precorrin-6A + S-adenosyl-L-homocysteine</text>
        <dbReference type="Rhea" id="RHEA:26285"/>
        <dbReference type="ChEBI" id="CHEBI:57856"/>
        <dbReference type="ChEBI" id="CHEBI:59789"/>
        <dbReference type="ChEBI" id="CHEBI:60063"/>
        <dbReference type="ChEBI" id="CHEBI:60064"/>
        <dbReference type="EC" id="2.1.1.195"/>
    </reaction>
</comment>
<comment type="pathway">
    <text evidence="1">Cofactor biosynthesis; adenosylcobalamin biosynthesis; cob(II)yrinate a,c-diamide from sirohydrochlorin (anaerobic route): step 6/10.</text>
</comment>
<comment type="similarity">
    <text evidence="1">Belongs to the CbiD family.</text>
</comment>
<evidence type="ECO:0000255" key="1">
    <source>
        <dbReference type="HAMAP-Rule" id="MF_00787"/>
    </source>
</evidence>
<organism>
    <name type="scientific">Salmonella schwarzengrund (strain CVM19633)</name>
    <dbReference type="NCBI Taxonomy" id="439843"/>
    <lineage>
        <taxon>Bacteria</taxon>
        <taxon>Pseudomonadati</taxon>
        <taxon>Pseudomonadota</taxon>
        <taxon>Gammaproteobacteria</taxon>
        <taxon>Enterobacterales</taxon>
        <taxon>Enterobacteriaceae</taxon>
        <taxon>Salmonella</taxon>
    </lineage>
</organism>
<feature type="chain" id="PRO_1000133748" description="Cobalt-precorrin-5B C(1)-methyltransferase">
    <location>
        <begin position="1"/>
        <end position="379"/>
    </location>
</feature>
<keyword id="KW-0169">Cobalamin biosynthesis</keyword>
<keyword id="KW-0489">Methyltransferase</keyword>
<keyword id="KW-0949">S-adenosyl-L-methionine</keyword>
<keyword id="KW-0808">Transferase</keyword>
<dbReference type="EC" id="2.1.1.195" evidence="1"/>
<dbReference type="EMBL" id="CP001127">
    <property type="protein sequence ID" value="ACF89597.1"/>
    <property type="molecule type" value="Genomic_DNA"/>
</dbReference>
<dbReference type="RefSeq" id="WP_001292915.1">
    <property type="nucleotide sequence ID" value="NC_011094.1"/>
</dbReference>
<dbReference type="SMR" id="B4TZR1"/>
<dbReference type="KEGG" id="sew:SeSA_A2201"/>
<dbReference type="HOGENOM" id="CLU_041273_1_0_6"/>
<dbReference type="UniPathway" id="UPA00148">
    <property type="reaction ID" value="UER00227"/>
</dbReference>
<dbReference type="Proteomes" id="UP000001865">
    <property type="component" value="Chromosome"/>
</dbReference>
<dbReference type="GO" id="GO:0043780">
    <property type="term" value="F:cobalt-precorrin-5B C1-methyltransferase activity"/>
    <property type="evidence" value="ECO:0007669"/>
    <property type="project" value="RHEA"/>
</dbReference>
<dbReference type="GO" id="GO:0019251">
    <property type="term" value="P:anaerobic cobalamin biosynthetic process"/>
    <property type="evidence" value="ECO:0007669"/>
    <property type="project" value="UniProtKB-UniRule"/>
</dbReference>
<dbReference type="GO" id="GO:0032259">
    <property type="term" value="P:methylation"/>
    <property type="evidence" value="ECO:0007669"/>
    <property type="project" value="UniProtKB-KW"/>
</dbReference>
<dbReference type="Gene3D" id="3.30.2110.10">
    <property type="entry name" value="CbiD-like"/>
    <property type="match status" value="1"/>
</dbReference>
<dbReference type="HAMAP" id="MF_00787">
    <property type="entry name" value="CbiD"/>
    <property type="match status" value="1"/>
</dbReference>
<dbReference type="InterPro" id="IPR002748">
    <property type="entry name" value="CbiD"/>
</dbReference>
<dbReference type="InterPro" id="IPR036074">
    <property type="entry name" value="CbiD_sf"/>
</dbReference>
<dbReference type="NCBIfam" id="TIGR00312">
    <property type="entry name" value="cbiD"/>
    <property type="match status" value="1"/>
</dbReference>
<dbReference type="PANTHER" id="PTHR35863">
    <property type="entry name" value="COBALT-PRECORRIN-5B C(1)-METHYLTRANSFERASE"/>
    <property type="match status" value="1"/>
</dbReference>
<dbReference type="PANTHER" id="PTHR35863:SF1">
    <property type="entry name" value="COBALT-PRECORRIN-5B C(1)-METHYLTRANSFERASE"/>
    <property type="match status" value="1"/>
</dbReference>
<dbReference type="Pfam" id="PF01888">
    <property type="entry name" value="CbiD"/>
    <property type="match status" value="1"/>
</dbReference>
<dbReference type="PIRSF" id="PIRSF026782">
    <property type="entry name" value="CbiD"/>
    <property type="match status" value="1"/>
</dbReference>
<dbReference type="SUPFAM" id="SSF111342">
    <property type="entry name" value="CbiD-like"/>
    <property type="match status" value="1"/>
</dbReference>
<reference key="1">
    <citation type="journal article" date="2011" name="J. Bacteriol.">
        <title>Comparative genomics of 28 Salmonella enterica isolates: evidence for CRISPR-mediated adaptive sublineage evolution.</title>
        <authorList>
            <person name="Fricke W.F."/>
            <person name="Mammel M.K."/>
            <person name="McDermott P.F."/>
            <person name="Tartera C."/>
            <person name="White D.G."/>
            <person name="Leclerc J.E."/>
            <person name="Ravel J."/>
            <person name="Cebula T.A."/>
        </authorList>
    </citation>
    <scope>NUCLEOTIDE SEQUENCE [LARGE SCALE GENOMIC DNA]</scope>
    <source>
        <strain>CVM19633</strain>
    </source>
</reference>